<protein>
    <recommendedName>
        <fullName>Protein dif-1</fullName>
    </recommendedName>
</protein>
<organism>
    <name type="scientific">Caenorhabditis elegans</name>
    <dbReference type="NCBI Taxonomy" id="6239"/>
    <lineage>
        <taxon>Eukaryota</taxon>
        <taxon>Metazoa</taxon>
        <taxon>Ecdysozoa</taxon>
        <taxon>Nematoda</taxon>
        <taxon>Chromadorea</taxon>
        <taxon>Rhabditida</taxon>
        <taxon>Rhabditina</taxon>
        <taxon>Rhabditomorpha</taxon>
        <taxon>Rhabditoidea</taxon>
        <taxon>Rhabditidae</taxon>
        <taxon>Peloderinae</taxon>
        <taxon>Caenorhabditis</taxon>
    </lineage>
</organism>
<comment type="function">
    <text>Seems to play a role in the maintenance of tissue differentiation in the developing embryo, but not for its initiation.</text>
</comment>
<comment type="subcellular location">
    <subcellularLocation>
        <location evidence="2">Mitochondrion inner membrane</location>
        <topology evidence="2">Multi-pass membrane protein</topology>
    </subcellularLocation>
</comment>
<comment type="developmental stage">
    <text>Although dif-1 activity is required only during embryogenesis, it is expressed at all stages of development.</text>
</comment>
<comment type="similarity">
    <text evidence="2">Belongs to the mitochondrial carrier (TC 2.A.29) family.</text>
</comment>
<reference key="1">
    <citation type="journal article" date="1994" name="DNA Seq.">
        <title>Extension of the mitochondrial transporter super-family: sequences of five members from the nematode worm, Caenorhabditis elegans.</title>
        <authorList>
            <person name="Runswick M.J."/>
            <person name="Philippides A."/>
            <person name="Lauria G."/>
            <person name="Walker J.E."/>
        </authorList>
    </citation>
    <scope>NUCLEOTIDE SEQUENCE [MRNA]</scope>
</reference>
<reference key="2">
    <citation type="journal article" date="1995" name="EMBO J.">
        <title>Embryonic tissue differentiation in Caenorhabditis elegans requires dif-1, a gene homologous to mitochondrial solute carriers.</title>
        <authorList>
            <person name="Ahringer J."/>
        </authorList>
    </citation>
    <scope>NUCLEOTIDE SEQUENCE [GENOMIC DNA]</scope>
    <source>
        <strain>Bristol N2</strain>
    </source>
</reference>
<reference key="3">
    <citation type="journal article" date="1998" name="Science">
        <title>Genome sequence of the nematode C. elegans: a platform for investigating biology.</title>
        <authorList>
            <consortium name="The C. elegans sequencing consortium"/>
        </authorList>
    </citation>
    <scope>NUCLEOTIDE SEQUENCE [LARGE SCALE GENOMIC DNA]</scope>
    <source>
        <strain>Bristol N2</strain>
    </source>
</reference>
<dbReference type="EMBL" id="X76115">
    <property type="protein sequence ID" value="CAA53721.1"/>
    <property type="molecule type" value="mRNA"/>
</dbReference>
<dbReference type="EMBL" id="Z48240">
    <property type="protein sequence ID" value="CAA88283.1"/>
    <property type="molecule type" value="Genomic_DNA"/>
</dbReference>
<dbReference type="EMBL" id="FO081280">
    <property type="protein sequence ID" value="CCD70447.1"/>
    <property type="molecule type" value="Genomic_DNA"/>
</dbReference>
<dbReference type="PIR" id="T29640">
    <property type="entry name" value="T29640"/>
</dbReference>
<dbReference type="RefSeq" id="NP_001379917.1">
    <property type="nucleotide sequence ID" value="NM_001392331.1"/>
</dbReference>
<dbReference type="RefSeq" id="NP_501223.1">
    <property type="nucleotide sequence ID" value="NM_068822.5"/>
</dbReference>
<dbReference type="SMR" id="Q27257"/>
<dbReference type="BioGRID" id="42648">
    <property type="interactions" value="22"/>
</dbReference>
<dbReference type="FunCoup" id="Q27257">
    <property type="interactions" value="2061"/>
</dbReference>
<dbReference type="IntAct" id="Q27257">
    <property type="interactions" value="1"/>
</dbReference>
<dbReference type="STRING" id="6239.F49E8.5.3"/>
<dbReference type="TCDB" id="2.A.29.8.2">
    <property type="family name" value="the mitochondrial carrier (mc) family"/>
</dbReference>
<dbReference type="PaxDb" id="6239-F49E8.5.2"/>
<dbReference type="PeptideAtlas" id="Q27257"/>
<dbReference type="EnsemblMetazoa" id="F49E8.5.1">
    <property type="protein sequence ID" value="F49E8.5.1"/>
    <property type="gene ID" value="WBGene00000996"/>
</dbReference>
<dbReference type="EnsemblMetazoa" id="F49E8.5.2">
    <property type="protein sequence ID" value="F49E8.5.2"/>
    <property type="gene ID" value="WBGene00000996"/>
</dbReference>
<dbReference type="GeneID" id="177530"/>
<dbReference type="UCSC" id="F49E8.5.1">
    <property type="organism name" value="c. elegans"/>
</dbReference>
<dbReference type="AGR" id="WB:WBGene00000996"/>
<dbReference type="WormBase" id="F49E8.5">
    <property type="protein sequence ID" value="CE28408"/>
    <property type="gene ID" value="WBGene00000996"/>
    <property type="gene designation" value="dif-1"/>
</dbReference>
<dbReference type="eggNOG" id="KOG0758">
    <property type="taxonomic scope" value="Eukaryota"/>
</dbReference>
<dbReference type="GeneTree" id="ENSGT00940000167609"/>
<dbReference type="HOGENOM" id="CLU_015166_16_0_1"/>
<dbReference type="InParanoid" id="Q27257"/>
<dbReference type="OMA" id="NWAVGIP"/>
<dbReference type="OrthoDB" id="14252at2759"/>
<dbReference type="PhylomeDB" id="Q27257"/>
<dbReference type="Reactome" id="R-CEL-200425">
    <property type="pathway name" value="Carnitine shuttle"/>
</dbReference>
<dbReference type="PRO" id="PR:Q27257"/>
<dbReference type="Proteomes" id="UP000001940">
    <property type="component" value="Chromosome IV"/>
</dbReference>
<dbReference type="Bgee" id="WBGene00000996">
    <property type="expression patterns" value="Expressed in embryo and 6 other cell types or tissues"/>
</dbReference>
<dbReference type="GO" id="GO:0005740">
    <property type="term" value="C:mitochondrial envelope"/>
    <property type="evidence" value="ECO:0000315"/>
    <property type="project" value="UniProtKB"/>
</dbReference>
<dbReference type="GO" id="GO:0005743">
    <property type="term" value="C:mitochondrial inner membrane"/>
    <property type="evidence" value="ECO:0007669"/>
    <property type="project" value="UniProtKB-SubCell"/>
</dbReference>
<dbReference type="GO" id="GO:0005471">
    <property type="term" value="F:ATP:ADP antiporter activity"/>
    <property type="evidence" value="ECO:0007669"/>
    <property type="project" value="InterPro"/>
</dbReference>
<dbReference type="GO" id="GO:0015227">
    <property type="term" value="F:O-acyl-L-carnitine transmembrane transporter activity"/>
    <property type="evidence" value="ECO:0000318"/>
    <property type="project" value="GO_Central"/>
</dbReference>
<dbReference type="GO" id="GO:1902603">
    <property type="term" value="P:carnitine transmembrane transport"/>
    <property type="evidence" value="ECO:0000318"/>
    <property type="project" value="GO_Central"/>
</dbReference>
<dbReference type="GO" id="GO:0140021">
    <property type="term" value="P:mitochondrial ADP transmembrane transport"/>
    <property type="evidence" value="ECO:0007669"/>
    <property type="project" value="InterPro"/>
</dbReference>
<dbReference type="GO" id="GO:1990544">
    <property type="term" value="P:mitochondrial ATP transmembrane transport"/>
    <property type="evidence" value="ECO:0007669"/>
    <property type="project" value="InterPro"/>
</dbReference>
<dbReference type="GO" id="GO:0006839">
    <property type="term" value="P:mitochondrial transport"/>
    <property type="evidence" value="ECO:0000315"/>
    <property type="project" value="UniProtKB"/>
</dbReference>
<dbReference type="FunFam" id="1.50.40.10:FF:000051">
    <property type="entry name" value="Mitochondrial carnitine/acylcarnitine carrier protein"/>
    <property type="match status" value="1"/>
</dbReference>
<dbReference type="Gene3D" id="1.50.40.10">
    <property type="entry name" value="Mitochondrial carrier domain"/>
    <property type="match status" value="2"/>
</dbReference>
<dbReference type="InterPro" id="IPR002113">
    <property type="entry name" value="ADT_euk_type"/>
</dbReference>
<dbReference type="InterPro" id="IPR050567">
    <property type="entry name" value="Mitochondrial_Carrier"/>
</dbReference>
<dbReference type="InterPro" id="IPR018108">
    <property type="entry name" value="Mitochondrial_sb/sol_carrier"/>
</dbReference>
<dbReference type="InterPro" id="IPR023395">
    <property type="entry name" value="Mt_carrier_dom_sf"/>
</dbReference>
<dbReference type="PANTHER" id="PTHR45624:SF4">
    <property type="entry name" value="CONGESTED-LIKE TRACHEA PROTEIN-RELATED"/>
    <property type="match status" value="1"/>
</dbReference>
<dbReference type="PANTHER" id="PTHR45624">
    <property type="entry name" value="MITOCHONDRIAL BASIC AMINO ACIDS TRANSPORTER-RELATED"/>
    <property type="match status" value="1"/>
</dbReference>
<dbReference type="Pfam" id="PF00153">
    <property type="entry name" value="Mito_carr"/>
    <property type="match status" value="3"/>
</dbReference>
<dbReference type="PRINTS" id="PR00927">
    <property type="entry name" value="ADPTRNSLCASE"/>
</dbReference>
<dbReference type="SUPFAM" id="SSF103506">
    <property type="entry name" value="Mitochondrial carrier"/>
    <property type="match status" value="1"/>
</dbReference>
<dbReference type="PROSITE" id="PS50920">
    <property type="entry name" value="SOLCAR"/>
    <property type="match status" value="3"/>
</dbReference>
<proteinExistence type="evidence at transcript level"/>
<gene>
    <name type="primary">dif-1</name>
    <name type="ORF">F49E8.5</name>
</gene>
<keyword id="KW-0217">Developmental protein</keyword>
<keyword id="KW-0472">Membrane</keyword>
<keyword id="KW-0496">Mitochondrion</keyword>
<keyword id="KW-0999">Mitochondrion inner membrane</keyword>
<keyword id="KW-1185">Reference proteome</keyword>
<keyword id="KW-0677">Repeat</keyword>
<keyword id="KW-0812">Transmembrane</keyword>
<keyword id="KW-1133">Transmembrane helix</keyword>
<keyword id="KW-0813">Transport</keyword>
<sequence>MSDVLLNFIAGGVGGSCTVIVGHPFDTVKVRIQTMPMPKPGEKPQFTGALDCVKRTVSKEGFFALYKGMAAPLVGVSPLFAVFFGGCAVGKWLQQTDPSQEMTFIQNANAGALAGVFTTIVMVPGERIKCLLQVQQAGSAGSGVHYDGPLDVVKKLYKQGGISSIYRGTGATLLRDIPASAAYLSVYEYLKKKFSGEGAQRTLSPGATLMAGGLAGIANWGVCIPADVLKSRLQTAPEGKYPDGIRGVLREVLREEGPRALFKGFWPVMLRAFPANAACFFGLELTLAAFRYFGIGGHPTPSTEVVPLPHDE</sequence>
<feature type="chain" id="PRO_0000090693" description="Protein dif-1">
    <location>
        <begin position="1"/>
        <end position="312"/>
    </location>
</feature>
<feature type="transmembrane region" description="Helical; Name=1" evidence="1">
    <location>
        <begin position="5"/>
        <end position="25"/>
    </location>
</feature>
<feature type="transmembrane region" description="Helical; Name=2" evidence="1">
    <location>
        <begin position="69"/>
        <end position="89"/>
    </location>
</feature>
<feature type="transmembrane region" description="Helical; Name=3" evidence="1">
    <location>
        <begin position="104"/>
        <end position="124"/>
    </location>
</feature>
<feature type="transmembrane region" description="Helical; Name=4" evidence="1">
    <location>
        <begin position="172"/>
        <end position="192"/>
    </location>
</feature>
<feature type="transmembrane region" description="Helical; Name=5" evidence="1">
    <location>
        <begin position="209"/>
        <end position="229"/>
    </location>
</feature>
<feature type="transmembrane region" description="Helical; Name=6" evidence="1">
    <location>
        <begin position="261"/>
        <end position="282"/>
    </location>
</feature>
<feature type="repeat" description="Solcar 1">
    <location>
        <begin position="2"/>
        <end position="93"/>
    </location>
</feature>
<feature type="repeat" description="Solcar 2">
    <location>
        <begin position="102"/>
        <end position="193"/>
    </location>
</feature>
<feature type="repeat" description="Solcar 3">
    <location>
        <begin position="203"/>
        <end position="289"/>
    </location>
</feature>
<evidence type="ECO:0000255" key="1"/>
<evidence type="ECO:0000305" key="2"/>
<name>DIF1_CAEEL</name>
<accession>Q27257</accession>
<accession>Q20630</accession>